<feature type="signal peptide" evidence="3">
    <location>
        <begin position="1"/>
        <end position="24"/>
    </location>
</feature>
<feature type="propeptide" id="PRO_0000446710" evidence="7">
    <location>
        <begin position="25"/>
        <end position="36"/>
    </location>
</feature>
<feature type="peptide" id="PRO_0000446711" description="Kappa-scoloptoxin(04)-Ssd1a" evidence="7">
    <location>
        <begin position="37"/>
        <end position="65"/>
    </location>
</feature>
<feature type="disulfide bond" evidence="1 2">
    <location>
        <begin position="42"/>
        <end position="53"/>
    </location>
</feature>
<feature type="disulfide bond" evidence="1 2">
    <location>
        <begin position="47"/>
        <end position="60"/>
    </location>
</feature>
<dbReference type="EMBL" id="KC144226">
    <property type="status" value="NOT_ANNOTATED_CDS"/>
    <property type="molecule type" value="mRNA"/>
</dbReference>
<dbReference type="GO" id="GO:0005576">
    <property type="term" value="C:extracellular region"/>
    <property type="evidence" value="ECO:0007669"/>
    <property type="project" value="UniProtKB-SubCell"/>
</dbReference>
<dbReference type="GO" id="GO:0015459">
    <property type="term" value="F:potassium channel regulator activity"/>
    <property type="evidence" value="ECO:0007669"/>
    <property type="project" value="UniProtKB-KW"/>
</dbReference>
<dbReference type="GO" id="GO:0090729">
    <property type="term" value="F:toxin activity"/>
    <property type="evidence" value="ECO:0007669"/>
    <property type="project" value="UniProtKB-KW"/>
</dbReference>
<sequence>MKKTCVVSVFLVLLLLKFHDLSMGEEISPLKKVAPREQIFPCPGFPCPKGYFCDKGSQKCREGTD</sequence>
<evidence type="ECO:0000250" key="1">
    <source>
        <dbReference type="UniProtKB" id="A0A0N7CSQ4"/>
    </source>
</evidence>
<evidence type="ECO:0000250" key="2">
    <source>
        <dbReference type="UniProtKB" id="P0DRC9"/>
    </source>
</evidence>
<evidence type="ECO:0000255" key="3"/>
<evidence type="ECO:0000269" key="4">
    <source>
    </source>
</evidence>
<evidence type="ECO:0000303" key="5">
    <source>
    </source>
</evidence>
<evidence type="ECO:0000305" key="6"/>
<evidence type="ECO:0000305" key="7">
    <source>
    </source>
</evidence>
<name>TX41A_SCODE</name>
<reference key="1">
    <citation type="journal article" date="2012" name="J. Proteome Res.">
        <title>Venomic and transcriptomic analysis of centipede Scolopendra subspinipes dehaani.</title>
        <authorList>
            <person name="Liu Z.C."/>
            <person name="Zhang R."/>
            <person name="Zhao F."/>
            <person name="Chen Z.M."/>
            <person name="Liu H.W."/>
            <person name="Wang Y.J."/>
            <person name="Jiang P."/>
            <person name="Zhang Y."/>
            <person name="Wu Y."/>
            <person name="Ding J.P."/>
            <person name="Lee W.H."/>
            <person name="Zhang Y."/>
        </authorList>
    </citation>
    <scope>NUCLEOTIDE SEQUENCE [MRNA]</scope>
    <scope>PROTEIN SEQUENCE OF 37-61</scope>
    <scope>SUBCELLULAR LOCATION</scope>
    <scope>MASS SPECTROMETRY</scope>
    <scope>FUNCTION</scope>
    <source>
        <tissue>Venom</tissue>
        <tissue>Venom gland</tissue>
    </source>
</reference>
<organism>
    <name type="scientific">Scolopendra dehaani</name>
    <name type="common">Thai centipede</name>
    <name type="synonym">Scolopendra subspinipes dehaani</name>
    <dbReference type="NCBI Taxonomy" id="2609776"/>
    <lineage>
        <taxon>Eukaryota</taxon>
        <taxon>Metazoa</taxon>
        <taxon>Ecdysozoa</taxon>
        <taxon>Arthropoda</taxon>
        <taxon>Myriapoda</taxon>
        <taxon>Chilopoda</taxon>
        <taxon>Pleurostigmophora</taxon>
        <taxon>Scolopendromorpha</taxon>
        <taxon>Scolopendridae</taxon>
        <taxon>Scolopendra</taxon>
    </lineage>
</organism>
<keyword id="KW-0903">Direct protein sequencing</keyword>
<keyword id="KW-1015">Disulfide bond</keyword>
<keyword id="KW-0872">Ion channel impairing toxin</keyword>
<keyword id="KW-0632">Potassium channel impairing toxin</keyword>
<keyword id="KW-0964">Secreted</keyword>
<keyword id="KW-0732">Signal</keyword>
<keyword id="KW-0800">Toxin</keyword>
<keyword id="KW-1220">Voltage-gated potassium channel impairing toxin</keyword>
<proteinExistence type="evidence at protein level"/>
<accession>P0DPW9</accession>
<protein>
    <recommendedName>
        <fullName evidence="6">Kappa-scoloptoxin(04)-Ssd1a</fullName>
        <shortName evidence="6">Kappa-SLPTX(04)-Ssd1a</shortName>
    </recommendedName>
    <alternativeName>
        <fullName evidence="5">Toxin SSD219</fullName>
    </alternativeName>
</protein>
<comment type="function">
    <text evidence="7">Voltage-gated potassium channel inhibitor.</text>
</comment>
<comment type="subcellular location">
    <subcellularLocation>
        <location evidence="4">Secreted</location>
    </subcellularLocation>
</comment>
<comment type="tissue specificity">
    <text evidence="7">Expressed by the venom gland.</text>
</comment>
<comment type="mass spectrometry"/>
<comment type="similarity">
    <text evidence="6">Belongs to the scoloptoxin-04 family.</text>
</comment>